<feature type="chain" id="PRO_1000069753" description="7-cyano-7-deazaguanine synthase">
    <location>
        <begin position="1"/>
        <end position="244"/>
    </location>
</feature>
<feature type="binding site" evidence="1">
    <location>
        <begin position="14"/>
        <end position="24"/>
    </location>
    <ligand>
        <name>ATP</name>
        <dbReference type="ChEBI" id="CHEBI:30616"/>
    </ligand>
</feature>
<feature type="binding site" evidence="1">
    <location>
        <position position="202"/>
    </location>
    <ligand>
        <name>Zn(2+)</name>
        <dbReference type="ChEBI" id="CHEBI:29105"/>
    </ligand>
</feature>
<feature type="binding site" evidence="1">
    <location>
        <position position="217"/>
    </location>
    <ligand>
        <name>Zn(2+)</name>
        <dbReference type="ChEBI" id="CHEBI:29105"/>
    </ligand>
</feature>
<feature type="binding site" evidence="1">
    <location>
        <position position="220"/>
    </location>
    <ligand>
        <name>Zn(2+)</name>
        <dbReference type="ChEBI" id="CHEBI:29105"/>
    </ligand>
</feature>
<feature type="binding site" evidence="1">
    <location>
        <position position="223"/>
    </location>
    <ligand>
        <name>Zn(2+)</name>
        <dbReference type="ChEBI" id="CHEBI:29105"/>
    </ligand>
</feature>
<organism>
    <name type="scientific">Burkholderia ambifaria (strain ATCC BAA-244 / DSM 16087 / CCUG 44356 / LMG 19182 / AMMD)</name>
    <name type="common">Burkholderia cepacia (strain AMMD)</name>
    <dbReference type="NCBI Taxonomy" id="339670"/>
    <lineage>
        <taxon>Bacteria</taxon>
        <taxon>Pseudomonadati</taxon>
        <taxon>Pseudomonadota</taxon>
        <taxon>Betaproteobacteria</taxon>
        <taxon>Burkholderiales</taxon>
        <taxon>Burkholderiaceae</taxon>
        <taxon>Burkholderia</taxon>
        <taxon>Burkholderia cepacia complex</taxon>
    </lineage>
</organism>
<dbReference type="EC" id="6.3.4.20" evidence="1"/>
<dbReference type="EMBL" id="CP000440">
    <property type="protein sequence ID" value="ABI88730.1"/>
    <property type="molecule type" value="Genomic_DNA"/>
</dbReference>
<dbReference type="RefSeq" id="WP_011658229.1">
    <property type="nucleotide sequence ID" value="NZ_CP009798.1"/>
</dbReference>
<dbReference type="SMR" id="Q0BAU3"/>
<dbReference type="GeneID" id="93084634"/>
<dbReference type="KEGG" id="bam:Bamb_3174"/>
<dbReference type="PATRIC" id="fig|339670.21.peg.1685"/>
<dbReference type="eggNOG" id="COG0603">
    <property type="taxonomic scope" value="Bacteria"/>
</dbReference>
<dbReference type="UniPathway" id="UPA00391"/>
<dbReference type="Proteomes" id="UP000000662">
    <property type="component" value="Chromosome 1"/>
</dbReference>
<dbReference type="GO" id="GO:0005524">
    <property type="term" value="F:ATP binding"/>
    <property type="evidence" value="ECO:0007669"/>
    <property type="project" value="UniProtKB-UniRule"/>
</dbReference>
<dbReference type="GO" id="GO:0016879">
    <property type="term" value="F:ligase activity, forming carbon-nitrogen bonds"/>
    <property type="evidence" value="ECO:0007669"/>
    <property type="project" value="UniProtKB-UniRule"/>
</dbReference>
<dbReference type="GO" id="GO:0008270">
    <property type="term" value="F:zinc ion binding"/>
    <property type="evidence" value="ECO:0007669"/>
    <property type="project" value="UniProtKB-UniRule"/>
</dbReference>
<dbReference type="GO" id="GO:0008616">
    <property type="term" value="P:queuosine biosynthetic process"/>
    <property type="evidence" value="ECO:0007669"/>
    <property type="project" value="UniProtKB-UniRule"/>
</dbReference>
<dbReference type="CDD" id="cd01995">
    <property type="entry name" value="QueC-like"/>
    <property type="match status" value="1"/>
</dbReference>
<dbReference type="Gene3D" id="3.40.50.620">
    <property type="entry name" value="HUPs"/>
    <property type="match status" value="1"/>
</dbReference>
<dbReference type="HAMAP" id="MF_01633">
    <property type="entry name" value="QueC"/>
    <property type="match status" value="1"/>
</dbReference>
<dbReference type="InterPro" id="IPR018317">
    <property type="entry name" value="QueC"/>
</dbReference>
<dbReference type="InterPro" id="IPR014729">
    <property type="entry name" value="Rossmann-like_a/b/a_fold"/>
</dbReference>
<dbReference type="NCBIfam" id="TIGR00364">
    <property type="entry name" value="7-cyano-7-deazaguanine synthase QueC"/>
    <property type="match status" value="1"/>
</dbReference>
<dbReference type="PANTHER" id="PTHR42914">
    <property type="entry name" value="7-CYANO-7-DEAZAGUANINE SYNTHASE"/>
    <property type="match status" value="1"/>
</dbReference>
<dbReference type="PANTHER" id="PTHR42914:SF1">
    <property type="entry name" value="7-CYANO-7-DEAZAGUANINE SYNTHASE"/>
    <property type="match status" value="1"/>
</dbReference>
<dbReference type="Pfam" id="PF06508">
    <property type="entry name" value="QueC"/>
    <property type="match status" value="1"/>
</dbReference>
<dbReference type="PIRSF" id="PIRSF006293">
    <property type="entry name" value="ExsB"/>
    <property type="match status" value="1"/>
</dbReference>
<dbReference type="SUPFAM" id="SSF52402">
    <property type="entry name" value="Adenine nucleotide alpha hydrolases-like"/>
    <property type="match status" value="1"/>
</dbReference>
<protein>
    <recommendedName>
        <fullName evidence="1">7-cyano-7-deazaguanine synthase</fullName>
        <ecNumber evidence="1">6.3.4.20</ecNumber>
    </recommendedName>
    <alternativeName>
        <fullName evidence="1">7-cyano-7-carbaguanine synthase</fullName>
    </alternativeName>
    <alternativeName>
        <fullName evidence="1">PreQ(0) synthase</fullName>
    </alternativeName>
    <alternativeName>
        <fullName evidence="1">Queuosine biosynthesis protein QueC</fullName>
    </alternativeName>
</protein>
<sequence length="244" mass="27122">MIRTDAKDGALVLFSGGQDSATCVAWALERYQTVETLGFDYGQRHRVELECREGVRDALKHRFPAWAGRLGDDHMIDLSVLGAISDTAMTRTIEIETTANGLPNTFVPGRNLLFMTIAAAIAYRRGLRVLVGGMCETDFSGYPDCRDDTMKALQVALNLGMDTRIVLETPLMWLDKAQTWQLAEQLGGDALVELIRVETHTCYVGERAELHDWGFGCGECPACKLRKRGYEAYLKGERVTEAPL</sequence>
<proteinExistence type="inferred from homology"/>
<gene>
    <name evidence="1" type="primary">queC</name>
    <name type="ordered locus">Bamb_3174</name>
</gene>
<comment type="function">
    <text evidence="1">Catalyzes the ATP-dependent conversion of 7-carboxy-7-deazaguanine (CDG) to 7-cyano-7-deazaguanine (preQ(0)).</text>
</comment>
<comment type="catalytic activity">
    <reaction evidence="1">
        <text>7-carboxy-7-deazaguanine + NH4(+) + ATP = 7-cyano-7-deazaguanine + ADP + phosphate + H2O + H(+)</text>
        <dbReference type="Rhea" id="RHEA:27982"/>
        <dbReference type="ChEBI" id="CHEBI:15377"/>
        <dbReference type="ChEBI" id="CHEBI:15378"/>
        <dbReference type="ChEBI" id="CHEBI:28938"/>
        <dbReference type="ChEBI" id="CHEBI:30616"/>
        <dbReference type="ChEBI" id="CHEBI:43474"/>
        <dbReference type="ChEBI" id="CHEBI:45075"/>
        <dbReference type="ChEBI" id="CHEBI:61036"/>
        <dbReference type="ChEBI" id="CHEBI:456216"/>
        <dbReference type="EC" id="6.3.4.20"/>
    </reaction>
</comment>
<comment type="cofactor">
    <cofactor evidence="1">
        <name>Zn(2+)</name>
        <dbReference type="ChEBI" id="CHEBI:29105"/>
    </cofactor>
    <text evidence="1">Binds 1 zinc ion per subunit.</text>
</comment>
<comment type="pathway">
    <text evidence="1">Purine metabolism; 7-cyano-7-deazaguanine biosynthesis.</text>
</comment>
<comment type="similarity">
    <text evidence="1">Belongs to the QueC family.</text>
</comment>
<name>QUEC_BURCM</name>
<keyword id="KW-0067">ATP-binding</keyword>
<keyword id="KW-0436">Ligase</keyword>
<keyword id="KW-0479">Metal-binding</keyword>
<keyword id="KW-0547">Nucleotide-binding</keyword>
<keyword id="KW-0671">Queuosine biosynthesis</keyword>
<keyword id="KW-0862">Zinc</keyword>
<accession>Q0BAU3</accession>
<evidence type="ECO:0000255" key="1">
    <source>
        <dbReference type="HAMAP-Rule" id="MF_01633"/>
    </source>
</evidence>
<reference key="1">
    <citation type="submission" date="2006-08" db="EMBL/GenBank/DDBJ databases">
        <title>Complete sequence of chromosome 1 of Burkholderia cepacia AMMD.</title>
        <authorList>
            <person name="Copeland A."/>
            <person name="Lucas S."/>
            <person name="Lapidus A."/>
            <person name="Barry K."/>
            <person name="Detter J.C."/>
            <person name="Glavina del Rio T."/>
            <person name="Hammon N."/>
            <person name="Israni S."/>
            <person name="Pitluck S."/>
            <person name="Bruce D."/>
            <person name="Chain P."/>
            <person name="Malfatti S."/>
            <person name="Shin M."/>
            <person name="Vergez L."/>
            <person name="Schmutz J."/>
            <person name="Larimer F."/>
            <person name="Land M."/>
            <person name="Hauser L."/>
            <person name="Kyrpides N."/>
            <person name="Kim E."/>
            <person name="Parke J."/>
            <person name="Coenye T."/>
            <person name="Konstantinidis K."/>
            <person name="Ramette A."/>
            <person name="Tiedje J."/>
            <person name="Richardson P."/>
        </authorList>
    </citation>
    <scope>NUCLEOTIDE SEQUENCE [LARGE SCALE GENOMIC DNA]</scope>
    <source>
        <strain>ATCC BAA-244 / DSM 16087 / CCUG 44356 / LMG 19182 / AMMD</strain>
    </source>
</reference>